<sequence>MAVGKNKRLTKGGKKGAKKKIVDPFSKKDWYDVKAPAMFNIRNLGKTLVTRTQGTKIASDGLKGRVFEVSLADLQNDEVAFRKFKLITEDVQGKNCLTNFHGMDLTRDKMCSMVKKWQTMIEAHVDVKTTDGYLLRLFCVGFTKKRNNQIRKTSYAQHQQVRQIRKKMMEIMTREVQTNDLKEVVNKLIPDSIGKDIEKACQSIYPLHDVYVRKVKMLKKPKFELGKLMELHGEGGGAGKPAGDETGAKVERADGYEPPVQESV</sequence>
<accession>Q642T2</accession>
<name>RS3A_XENTR</name>
<dbReference type="EMBL" id="CR760859">
    <property type="protein sequence ID" value="CAJ83216.1"/>
    <property type="molecule type" value="mRNA"/>
</dbReference>
<dbReference type="EMBL" id="BC080969">
    <property type="protein sequence ID" value="AAH80969.1"/>
    <property type="molecule type" value="mRNA"/>
</dbReference>
<dbReference type="RefSeq" id="NP_001008075.1">
    <property type="nucleotide sequence ID" value="NM_001008074.1"/>
</dbReference>
<dbReference type="SMR" id="Q642T2"/>
<dbReference type="FunCoup" id="Q642T2">
    <property type="interactions" value="2292"/>
</dbReference>
<dbReference type="STRING" id="8364.ENSXETP00000016718"/>
<dbReference type="PaxDb" id="8364-ENSXETP00000020709"/>
<dbReference type="DNASU" id="493437"/>
<dbReference type="GeneID" id="493437"/>
<dbReference type="KEGG" id="xtr:493437"/>
<dbReference type="AGR" id="Xenbase:XB-GENE-976731"/>
<dbReference type="CTD" id="6189"/>
<dbReference type="Xenbase" id="XB-GENE-976731">
    <property type="gene designation" value="rps3a"/>
</dbReference>
<dbReference type="eggNOG" id="KOG1628">
    <property type="taxonomic scope" value="Eukaryota"/>
</dbReference>
<dbReference type="HOGENOM" id="CLU_062507_0_1_1"/>
<dbReference type="InParanoid" id="Q642T2"/>
<dbReference type="OMA" id="TRFKGHE"/>
<dbReference type="OrthoDB" id="9834376at2759"/>
<dbReference type="PhylomeDB" id="Q642T2"/>
<dbReference type="TreeFam" id="TF300037"/>
<dbReference type="Reactome" id="R-XTR-156827">
    <property type="pathway name" value="L13a-mediated translational silencing of Ceruloplasmin expression"/>
</dbReference>
<dbReference type="Reactome" id="R-XTR-1799339">
    <property type="pathway name" value="SRP-dependent cotranslational protein targeting to membrane"/>
</dbReference>
<dbReference type="Reactome" id="R-XTR-72689">
    <property type="pathway name" value="Formation of a pool of free 40S subunits"/>
</dbReference>
<dbReference type="Reactome" id="R-XTR-72695">
    <property type="pathway name" value="Formation of the ternary complex, and subsequently, the 43S complex"/>
</dbReference>
<dbReference type="Reactome" id="R-XTR-72702">
    <property type="pathway name" value="Ribosomal scanning and start codon recognition"/>
</dbReference>
<dbReference type="Reactome" id="R-XTR-72706">
    <property type="pathway name" value="GTP hydrolysis and joining of the 60S ribosomal subunit"/>
</dbReference>
<dbReference type="Reactome" id="R-XTR-975956">
    <property type="pathway name" value="Nonsense Mediated Decay (NMD) independent of the Exon Junction Complex (EJC)"/>
</dbReference>
<dbReference type="Reactome" id="R-XTR-975957">
    <property type="pathway name" value="Nonsense Mediated Decay (NMD) enhanced by the Exon Junction Complex (EJC)"/>
</dbReference>
<dbReference type="Proteomes" id="UP000008143">
    <property type="component" value="Chromosome 1"/>
</dbReference>
<dbReference type="Bgee" id="ENSXETG00000009396">
    <property type="expression patterns" value="Expressed in mesonephros and 31 other cell types or tissues"/>
</dbReference>
<dbReference type="GO" id="GO:0022627">
    <property type="term" value="C:cytosolic small ribosomal subunit"/>
    <property type="evidence" value="ECO:0007669"/>
    <property type="project" value="UniProtKB-UniRule"/>
</dbReference>
<dbReference type="GO" id="GO:0005730">
    <property type="term" value="C:nucleolus"/>
    <property type="evidence" value="ECO:0007669"/>
    <property type="project" value="UniProtKB-SubCell"/>
</dbReference>
<dbReference type="GO" id="GO:0032040">
    <property type="term" value="C:small-subunit processome"/>
    <property type="evidence" value="ECO:0000250"/>
    <property type="project" value="UniProtKB"/>
</dbReference>
<dbReference type="GO" id="GO:0003735">
    <property type="term" value="F:structural constituent of ribosome"/>
    <property type="evidence" value="ECO:0007669"/>
    <property type="project" value="UniProtKB-UniRule"/>
</dbReference>
<dbReference type="GO" id="GO:0042274">
    <property type="term" value="P:ribosomal small subunit biogenesis"/>
    <property type="evidence" value="ECO:0000250"/>
    <property type="project" value="UniProtKB"/>
</dbReference>
<dbReference type="GO" id="GO:0006412">
    <property type="term" value="P:translation"/>
    <property type="evidence" value="ECO:0007669"/>
    <property type="project" value="UniProtKB-UniRule"/>
</dbReference>
<dbReference type="HAMAP" id="MF_03122">
    <property type="entry name" value="Ribosomal_eS1_euk"/>
    <property type="match status" value="1"/>
</dbReference>
<dbReference type="InterPro" id="IPR001593">
    <property type="entry name" value="Ribosomal_eS1"/>
</dbReference>
<dbReference type="InterPro" id="IPR018281">
    <property type="entry name" value="Ribosomal_eS1_CS"/>
</dbReference>
<dbReference type="InterPro" id="IPR027500">
    <property type="entry name" value="Ribosomal_eS1_euk"/>
</dbReference>
<dbReference type="PANTHER" id="PTHR11830">
    <property type="entry name" value="40S RIBOSOMAL PROTEIN S3A"/>
    <property type="match status" value="1"/>
</dbReference>
<dbReference type="Pfam" id="PF01015">
    <property type="entry name" value="Ribosomal_S3Ae"/>
    <property type="match status" value="1"/>
</dbReference>
<dbReference type="SMART" id="SM01397">
    <property type="entry name" value="Ribosomal_S3Ae"/>
    <property type="match status" value="1"/>
</dbReference>
<dbReference type="PROSITE" id="PS01191">
    <property type="entry name" value="RIBOSOMAL_S3AE"/>
    <property type="match status" value="1"/>
</dbReference>
<reference key="1">
    <citation type="submission" date="2006-03" db="EMBL/GenBank/DDBJ databases">
        <authorList>
            <consortium name="Sanger Xenopus tropicalis EST/cDNA project"/>
        </authorList>
    </citation>
    <scope>NUCLEOTIDE SEQUENCE [LARGE SCALE MRNA]</scope>
    <source>
        <tissue>Tadpole</tissue>
    </source>
</reference>
<reference key="2">
    <citation type="submission" date="2004-08" db="EMBL/GenBank/DDBJ databases">
        <authorList>
            <consortium name="NIH - Xenopus Gene Collection (XGC) project"/>
        </authorList>
    </citation>
    <scope>NUCLEOTIDE SEQUENCE [LARGE SCALE MRNA]</scope>
    <source>
        <tissue>Embryo</tissue>
    </source>
</reference>
<organism>
    <name type="scientific">Xenopus tropicalis</name>
    <name type="common">Western clawed frog</name>
    <name type="synonym">Silurana tropicalis</name>
    <dbReference type="NCBI Taxonomy" id="8364"/>
    <lineage>
        <taxon>Eukaryota</taxon>
        <taxon>Metazoa</taxon>
        <taxon>Chordata</taxon>
        <taxon>Craniata</taxon>
        <taxon>Vertebrata</taxon>
        <taxon>Euteleostomi</taxon>
        <taxon>Amphibia</taxon>
        <taxon>Batrachia</taxon>
        <taxon>Anura</taxon>
        <taxon>Pipoidea</taxon>
        <taxon>Pipidae</taxon>
        <taxon>Xenopodinae</taxon>
        <taxon>Xenopus</taxon>
        <taxon>Silurana</taxon>
    </lineage>
</organism>
<keyword id="KW-0963">Cytoplasm</keyword>
<keyword id="KW-0539">Nucleus</keyword>
<keyword id="KW-1185">Reference proteome</keyword>
<keyword id="KW-0687">Ribonucleoprotein</keyword>
<keyword id="KW-0689">Ribosomal protein</keyword>
<evidence type="ECO:0000250" key="1">
    <source>
        <dbReference type="UniProtKB" id="P61247"/>
    </source>
</evidence>
<evidence type="ECO:0000250" key="2">
    <source>
        <dbReference type="UniProtKB" id="P97351"/>
    </source>
</evidence>
<evidence type="ECO:0000255" key="3">
    <source>
        <dbReference type="HAMAP-Rule" id="MF_03122"/>
    </source>
</evidence>
<evidence type="ECO:0000256" key="4">
    <source>
        <dbReference type="SAM" id="MobiDB-lite"/>
    </source>
</evidence>
<evidence type="ECO:0000305" key="5"/>
<feature type="initiator methionine" description="Removed" evidence="3">
    <location>
        <position position="1"/>
    </location>
</feature>
<feature type="chain" id="PRO_0000230770" description="Small ribosomal subunit protein eS1">
    <location>
        <begin position="2"/>
        <end position="264"/>
    </location>
</feature>
<feature type="region of interest" description="Disordered" evidence="4">
    <location>
        <begin position="233"/>
        <end position="264"/>
    </location>
</feature>
<feature type="compositionally biased region" description="Basic and acidic residues" evidence="4">
    <location>
        <begin position="242"/>
        <end position="255"/>
    </location>
</feature>
<proteinExistence type="evidence at transcript level"/>
<protein>
    <recommendedName>
        <fullName evidence="3">Small ribosomal subunit protein eS1</fullName>
    </recommendedName>
    <alternativeName>
        <fullName evidence="5">40S ribosomal protein S3a</fullName>
    </alternativeName>
</protein>
<comment type="function">
    <text evidence="1 3">Component of the small ribosomal subunit. The ribosome is a large ribonucleoprotein complex responsible for the synthesis of proteins in the cell. Part of the small subunit (SSU) processome, first precursor of the small eukaryotic ribosomal subunit. During the assembly of the SSU processome in the nucleolus, many ribosome biogenesis factors, an RNA chaperone and ribosomal proteins associate with the nascent pre-rRNA and work in concert to generate RNA folding, modifications, rearrangements and cleavage as well as targeted degradation of pre-ribosomal RNA by the RNA exosome (By similarity). May play a role during erythropoiesis (By similarity).</text>
</comment>
<comment type="subunit">
    <text evidence="1">Component of the small ribosomal subunit. Mature ribosomes consist of a small (40S) and a large (60S) subunit. The 40S subunit contains about 33 different proteins and 1 molecule of RNA (18S). The 60S subunit contains about 49 different proteins and 3 molecules of RNA (28S, 5.8S and 5S). Part of the small subunit (SSU) processome, composed of more than 70 proteins and the RNA chaperone small nucleolar RNA (snoRNA) U3.</text>
</comment>
<comment type="subcellular location">
    <subcellularLocation>
        <location evidence="2 3">Cytoplasm</location>
    </subcellularLocation>
    <subcellularLocation>
        <location evidence="2 3">Nucleus</location>
    </subcellularLocation>
    <subcellularLocation>
        <location evidence="1">Nucleus</location>
        <location evidence="1">Nucleolus</location>
    </subcellularLocation>
</comment>
<comment type="similarity">
    <text evidence="3">Belongs to the eukaryotic ribosomal protein eS1 family.</text>
</comment>
<gene>
    <name type="primary">rps3a</name>
    <name type="ORF">TTpA010n05.1</name>
</gene>